<name>BUD27_YEAST</name>
<organism>
    <name type="scientific">Saccharomyces cerevisiae (strain ATCC 204508 / S288c)</name>
    <name type="common">Baker's yeast</name>
    <dbReference type="NCBI Taxonomy" id="559292"/>
    <lineage>
        <taxon>Eukaryota</taxon>
        <taxon>Fungi</taxon>
        <taxon>Dikarya</taxon>
        <taxon>Ascomycota</taxon>
        <taxon>Saccharomycotina</taxon>
        <taxon>Saccharomycetes</taxon>
        <taxon>Saccharomycetales</taxon>
        <taxon>Saccharomycetaceae</taxon>
        <taxon>Saccharomyces</taxon>
    </lineage>
</organism>
<dbReference type="EMBL" id="D50617">
    <property type="protein sequence ID" value="BAA09215.1"/>
    <property type="molecule type" value="Genomic_DNA"/>
</dbReference>
<dbReference type="EMBL" id="BK006940">
    <property type="protein sequence ID" value="DAA12417.1"/>
    <property type="molecule type" value="Genomic_DNA"/>
</dbReference>
<dbReference type="PIR" id="S56231">
    <property type="entry name" value="S56231"/>
</dbReference>
<dbReference type="RefSeq" id="NP_683715.1">
    <property type="nucleotide sequence ID" value="NM_001179943.1"/>
</dbReference>
<dbReference type="SMR" id="P43573"/>
<dbReference type="BioGRID" id="31123">
    <property type="interactions" value="432"/>
</dbReference>
<dbReference type="DIP" id="DIP-4929N"/>
<dbReference type="FunCoup" id="P43573">
    <property type="interactions" value="164"/>
</dbReference>
<dbReference type="IntAct" id="P43573">
    <property type="interactions" value="38"/>
</dbReference>
<dbReference type="MINT" id="P43573"/>
<dbReference type="STRING" id="4932.YFL023W"/>
<dbReference type="iPTMnet" id="P43573"/>
<dbReference type="PaxDb" id="4932-YFL023W"/>
<dbReference type="PeptideAtlas" id="P43573"/>
<dbReference type="EnsemblFungi" id="YFL023W_mRNA">
    <property type="protein sequence ID" value="YFL023W"/>
    <property type="gene ID" value="YFL023W"/>
</dbReference>
<dbReference type="GeneID" id="850521"/>
<dbReference type="KEGG" id="sce:YFL023W"/>
<dbReference type="AGR" id="SGD:S000001871"/>
<dbReference type="SGD" id="S000001871">
    <property type="gene designation" value="BUD27"/>
</dbReference>
<dbReference type="VEuPathDB" id="FungiDB:YFL023W"/>
<dbReference type="eggNOG" id="ENOG502QVS0">
    <property type="taxonomic scope" value="Eukaryota"/>
</dbReference>
<dbReference type="HOGENOM" id="CLU_344512_0_0_1"/>
<dbReference type="InParanoid" id="P43573"/>
<dbReference type="OMA" id="FKLKQVC"/>
<dbReference type="OrthoDB" id="21413at2759"/>
<dbReference type="BioCyc" id="YEAST:G3O-30437-MONOMER"/>
<dbReference type="BioGRID-ORCS" id="850521">
    <property type="hits" value="0 hits in 10 CRISPR screens"/>
</dbReference>
<dbReference type="PRO" id="PR:P43573"/>
<dbReference type="Proteomes" id="UP000002311">
    <property type="component" value="Chromosome VI"/>
</dbReference>
<dbReference type="RNAct" id="P43573">
    <property type="molecule type" value="protein"/>
</dbReference>
<dbReference type="GO" id="GO:0005737">
    <property type="term" value="C:cytoplasm"/>
    <property type="evidence" value="ECO:0000314"/>
    <property type="project" value="SGD"/>
</dbReference>
<dbReference type="GO" id="GO:0016272">
    <property type="term" value="C:prefoldin complex"/>
    <property type="evidence" value="ECO:0000318"/>
    <property type="project" value="GO_Central"/>
</dbReference>
<dbReference type="GO" id="GO:0003729">
    <property type="term" value="F:mRNA binding"/>
    <property type="evidence" value="ECO:0000314"/>
    <property type="project" value="SGD"/>
</dbReference>
<dbReference type="GO" id="GO:0051082">
    <property type="term" value="F:unfolded protein binding"/>
    <property type="evidence" value="ECO:0007669"/>
    <property type="project" value="InterPro"/>
</dbReference>
<dbReference type="GO" id="GO:0042791">
    <property type="term" value="P:5S class rRNA transcription by RNA polymerase III"/>
    <property type="evidence" value="ECO:0000315"/>
    <property type="project" value="SGD"/>
</dbReference>
<dbReference type="GO" id="GO:0001731">
    <property type="term" value="P:formation of translation preinitiation complex"/>
    <property type="evidence" value="ECO:0000315"/>
    <property type="project" value="SGD"/>
</dbReference>
<dbReference type="GO" id="GO:2001209">
    <property type="term" value="P:positive regulation of transcription elongation by RNA polymerase I"/>
    <property type="evidence" value="ECO:0000315"/>
    <property type="project" value="SGD"/>
</dbReference>
<dbReference type="GO" id="GO:0006457">
    <property type="term" value="P:protein folding"/>
    <property type="evidence" value="ECO:0007669"/>
    <property type="project" value="InterPro"/>
</dbReference>
<dbReference type="GO" id="GO:1990113">
    <property type="term" value="P:RNA polymerase I assembly"/>
    <property type="evidence" value="ECO:0000315"/>
    <property type="project" value="SGD"/>
</dbReference>
<dbReference type="GO" id="GO:1990114">
    <property type="term" value="P:RNA polymerase II core complex assembly"/>
    <property type="evidence" value="ECO:0000315"/>
    <property type="project" value="SGD"/>
</dbReference>
<dbReference type="GO" id="GO:1990115">
    <property type="term" value="P:RNA polymerase III assembly"/>
    <property type="evidence" value="ECO:0000315"/>
    <property type="project" value="SGD"/>
</dbReference>
<dbReference type="GO" id="GO:0006364">
    <property type="term" value="P:rRNA processing"/>
    <property type="evidence" value="ECO:0000315"/>
    <property type="project" value="SGD"/>
</dbReference>
<dbReference type="GO" id="GO:0042797">
    <property type="term" value="P:tRNA transcription by RNA polymerase III"/>
    <property type="evidence" value="ECO:0000315"/>
    <property type="project" value="SGD"/>
</dbReference>
<dbReference type="FunFam" id="1.10.287.370:FF:000026">
    <property type="entry name" value="Bud site selection protein"/>
    <property type="match status" value="1"/>
</dbReference>
<dbReference type="Gene3D" id="1.10.287.370">
    <property type="match status" value="1"/>
</dbReference>
<dbReference type="InterPro" id="IPR024325">
    <property type="entry name" value="DUF3835"/>
</dbReference>
<dbReference type="InterPro" id="IPR011599">
    <property type="entry name" value="PFD_alpha_archaea"/>
</dbReference>
<dbReference type="InterPro" id="IPR009053">
    <property type="entry name" value="Prefoldin"/>
</dbReference>
<dbReference type="InterPro" id="IPR004127">
    <property type="entry name" value="Prefoldin_subunit_alpha"/>
</dbReference>
<dbReference type="PANTHER" id="PTHR12674">
    <property type="entry name" value="PREFOLDIN SUBUNIT 5"/>
    <property type="match status" value="1"/>
</dbReference>
<dbReference type="PANTHER" id="PTHR12674:SF2">
    <property type="entry name" value="PREFOLDIN SUBUNIT 5"/>
    <property type="match status" value="1"/>
</dbReference>
<dbReference type="Pfam" id="PF12927">
    <property type="entry name" value="DUF3835"/>
    <property type="match status" value="1"/>
</dbReference>
<dbReference type="Pfam" id="PF02996">
    <property type="entry name" value="Prefoldin"/>
    <property type="match status" value="1"/>
</dbReference>
<dbReference type="SUPFAM" id="SSF46579">
    <property type="entry name" value="Prefoldin"/>
    <property type="match status" value="1"/>
</dbReference>
<evidence type="ECO:0000255" key="1"/>
<evidence type="ECO:0000256" key="2">
    <source>
        <dbReference type="SAM" id="MobiDB-lite"/>
    </source>
</evidence>
<evidence type="ECO:0000269" key="3">
    <source>
    </source>
</evidence>
<evidence type="ECO:0000269" key="4">
    <source>
    </source>
</evidence>
<evidence type="ECO:0000269" key="5">
    <source>
    </source>
</evidence>
<evidence type="ECO:0000269" key="6">
    <source>
    </source>
</evidence>
<evidence type="ECO:0000269" key="7">
    <source>
    </source>
</evidence>
<evidence type="ECO:0000305" key="8"/>
<evidence type="ECO:0007744" key="9">
    <source>
    </source>
</evidence>
<evidence type="ECO:0007744" key="10">
    <source>
    </source>
</evidence>
<evidence type="ECO:0007744" key="11">
    <source>
    </source>
</evidence>
<protein>
    <recommendedName>
        <fullName>Bud site selection protein 27</fullName>
    </recommendedName>
</protein>
<sequence>MDLLAASVESTLKNLQDKRNFLSEQREHYIDIRSRLVRFINDNDDGEEEGEGQGMVFGDIIISTSKIYLSLGYEYYVEKTKEEAITFVDDKLKLMEDAIEQFNLKIEEAKKTLDNLNHMEDGNGIEEDEANNDEDFLPSMEIREELDDEGNVISSSVTPTTKQPSQSNSKKEQTPAVGPKEKGLAKEKKSKSFEENLKGKLLKRNDEVKKKVQPSKVDTENVYTFADLVQQMDQQDELEDGYIETDEINYDYDAFENSNFKVNDNYEEDDEDEDEEEYLNHSIIPGFEAQSSFLQQIQRLRAQKQSQDHEREEGDVNKSLKPILKKSSFAENSDKKQKKKQVGFASSLEIHEVENLKEENKRQMQSFAVPMYETQESTGIANKMTSDEFDGDLFAKMLGVQEADEVHEKYKEELINQERLEGEASRSNRRTRVSRFRKDRASKKENTLSTFKQETTRSVENEVVEKEPVVGDIIEKEPVVGDVIEKEPVVGDVIEKEPAVTDIVEREPAVNDIVERKPVVGDIIEKEPTINDIVEKEPEINSKSEFETPFKKKKLKSLQKPRSSKSMKKKFDPKILENISDDDYDDDDDGNKKLLSNKSKNNTDEQDKFPSKIQEVSRSMAKTGATVGSEPVRITNVDYHALGGNLDDMVKAYSLGLYDDDLEEDPGTIVEKLEDFKEYNKQVELLRDEIRDFQLENKPVTMEEEENDGNVMNDIIEHEFPESYTNDEDEVALHPGRLQEEVAIEYRRLKEATASKWQSSSPAAHTEGELEPIDKFGNPVKTSRFRSQRLHMDSKP</sequence>
<proteinExistence type="evidence at protein level"/>
<keyword id="KW-0175">Coiled coil</keyword>
<keyword id="KW-0963">Cytoplasm</keyword>
<keyword id="KW-0597">Phosphoprotein</keyword>
<keyword id="KW-1185">Reference proteome</keyword>
<feature type="chain" id="PRO_0000153693" description="Bud site selection protein 27">
    <location>
        <begin position="1"/>
        <end position="796"/>
    </location>
</feature>
<feature type="region of interest" description="Disordered" evidence="2">
    <location>
        <begin position="152"/>
        <end position="197"/>
    </location>
</feature>
<feature type="region of interest" description="Disordered" evidence="2">
    <location>
        <begin position="300"/>
        <end position="344"/>
    </location>
</feature>
<feature type="region of interest" description="Disordered" evidence="2">
    <location>
        <begin position="421"/>
        <end position="458"/>
    </location>
</feature>
<feature type="region of interest" description="Disordered" evidence="2">
    <location>
        <begin position="535"/>
        <end position="624"/>
    </location>
</feature>
<feature type="region of interest" description="Disordered" evidence="2">
    <location>
        <begin position="752"/>
        <end position="796"/>
    </location>
</feature>
<feature type="coiled-coil region" evidence="1">
    <location>
        <begin position="81"/>
        <end position="121"/>
    </location>
</feature>
<feature type="compositionally biased region" description="Polar residues" evidence="2">
    <location>
        <begin position="152"/>
        <end position="168"/>
    </location>
</feature>
<feature type="compositionally biased region" description="Basic and acidic residues" evidence="2">
    <location>
        <begin position="169"/>
        <end position="197"/>
    </location>
</feature>
<feature type="compositionally biased region" description="Basic and acidic residues" evidence="2">
    <location>
        <begin position="306"/>
        <end position="318"/>
    </location>
</feature>
<feature type="compositionally biased region" description="Basic residues" evidence="2">
    <location>
        <begin position="427"/>
        <end position="441"/>
    </location>
</feature>
<feature type="compositionally biased region" description="Basic and acidic residues" evidence="2">
    <location>
        <begin position="535"/>
        <end position="550"/>
    </location>
</feature>
<feature type="compositionally biased region" description="Basic residues" evidence="2">
    <location>
        <begin position="551"/>
        <end position="568"/>
    </location>
</feature>
<feature type="compositionally biased region" description="Acidic residues" evidence="2">
    <location>
        <begin position="579"/>
        <end position="589"/>
    </location>
</feature>
<feature type="compositionally biased region" description="Basic and acidic residues" evidence="2">
    <location>
        <begin position="601"/>
        <end position="610"/>
    </location>
</feature>
<feature type="modified residue" description="Phosphoserine" evidence="9 10 11">
    <location>
        <position position="580"/>
    </location>
</feature>
<comment type="function">
    <text evidence="3 4 7">Involved in gene expression controlled by TOR kinase and nutrient signaling. May also be involved in positioning the proximal bud pole signal.</text>
</comment>
<comment type="interaction">
    <interactant intactId="EBI-22787">
        <id>P43573</id>
    </interactant>
    <interactant intactId="EBI-6961">
        <id>P20081</id>
        <label>FPR1</label>
    </interactant>
    <organismsDiffer>false</organismsDiffer>
    <experiments>2</experiments>
</comment>
<comment type="interaction">
    <interactant intactId="EBI-22787">
        <id>P43573</id>
    </interactant>
    <interactant intactId="EBI-8627">
        <id>P11484</id>
        <label>SSB1</label>
    </interactant>
    <organismsDiffer>false</organismsDiffer>
    <experiments>3</experiments>
</comment>
<comment type="interaction">
    <interactant intactId="EBI-22787">
        <id>P43573</id>
    </interactant>
    <interactant intactId="EBI-6314">
        <id>P02994</id>
        <label>TEF2</label>
    </interactant>
    <organismsDiffer>false</organismsDiffer>
    <experiments>2</experiments>
</comment>
<comment type="interaction">
    <interactant intactId="EBI-22787">
        <id>P43573</id>
    </interactant>
    <interactant intactId="EBI-6329">
        <id>P36008</id>
        <label>TEF4</label>
    </interactant>
    <organismsDiffer>false</organismsDiffer>
    <experiments>3</experiments>
</comment>
<comment type="interaction">
    <interactant intactId="EBI-22787">
        <id>P43573</id>
    </interactant>
    <interactant intactId="EBI-13260">
        <id>P52553</id>
        <label>YKE2</label>
    </interactant>
    <organismsDiffer>false</organismsDiffer>
    <experiments>3</experiments>
</comment>
<comment type="subcellular location">
    <subcellularLocation>
        <location evidence="5">Cytoplasm</location>
    </subcellularLocation>
</comment>
<comment type="miscellaneous">
    <text evidence="6">Present with 1300 molecules/cell in log phase SD medium.</text>
</comment>
<comment type="miscellaneous">
    <text>Deletion leads to a K1 killer toxin hypersensitivity.</text>
</comment>
<comment type="similarity">
    <text evidence="8">Belongs to the prefoldin subunit alpha family.</text>
</comment>
<accession>P43573</accession>
<accession>D6VTK7</accession>
<reference key="1">
    <citation type="journal article" date="1995" name="Nat. Genet.">
        <title>Analysis of the nucleotide sequence of chromosome VI from Saccharomyces cerevisiae.</title>
        <authorList>
            <person name="Murakami Y."/>
            <person name="Naitou M."/>
            <person name="Hagiwara H."/>
            <person name="Shibata T."/>
            <person name="Ozawa M."/>
            <person name="Sasanuma S."/>
            <person name="Sasanuma M."/>
            <person name="Tsuchiya Y."/>
            <person name="Soeda E."/>
            <person name="Yokoyama K."/>
            <person name="Yamazaki M."/>
            <person name="Tashiro H."/>
            <person name="Eki T."/>
        </authorList>
    </citation>
    <scope>NUCLEOTIDE SEQUENCE [LARGE SCALE GENOMIC DNA]</scope>
    <source>
        <strain>ATCC 204508 / S288c</strain>
    </source>
</reference>
<reference key="2">
    <citation type="journal article" date="2014" name="G3 (Bethesda)">
        <title>The reference genome sequence of Saccharomyces cerevisiae: Then and now.</title>
        <authorList>
            <person name="Engel S.R."/>
            <person name="Dietrich F.S."/>
            <person name="Fisk D.G."/>
            <person name="Binkley G."/>
            <person name="Balakrishnan R."/>
            <person name="Costanzo M.C."/>
            <person name="Dwight S.S."/>
            <person name="Hitz B.C."/>
            <person name="Karra K."/>
            <person name="Nash R.S."/>
            <person name="Weng S."/>
            <person name="Wong E.D."/>
            <person name="Lloyd P."/>
            <person name="Skrzypek M.S."/>
            <person name="Miyasato S.R."/>
            <person name="Simison M."/>
            <person name="Cherry J.M."/>
        </authorList>
    </citation>
    <scope>GENOME REANNOTATION</scope>
    <source>
        <strain>ATCC 204508 / S288c</strain>
    </source>
</reference>
<reference key="3">
    <citation type="journal article" date="2001" name="Mol. Biol. Cell">
        <title>A genomic study of the bipolar bud site selection pattern in Saccharomyces cerevisiae.</title>
        <authorList>
            <person name="Ni L."/>
            <person name="Snyder M."/>
        </authorList>
    </citation>
    <scope>FUNCTION</scope>
</reference>
<reference key="4">
    <citation type="journal article" date="2003" name="Genetics">
        <title>A Saccharomyces cerevisiae genome-wide mutant screen for altered sensitivity to K1 killer toxin.</title>
        <authorList>
            <person name="Page N."/>
            <person name="Gerard-Vincent M."/>
            <person name="Menard P."/>
            <person name="Beaulieu M."/>
            <person name="Azuma M."/>
            <person name="Dijkgraaf G.J.P."/>
            <person name="Li H."/>
            <person name="Marcoux J."/>
            <person name="Nguyen T."/>
            <person name="Dowse T."/>
            <person name="Sdicu A.-M."/>
            <person name="Bussey H."/>
        </authorList>
    </citation>
    <scope>FUNCTION</scope>
</reference>
<reference key="5">
    <citation type="journal article" date="2003" name="Nature">
        <title>Global analysis of protein localization in budding yeast.</title>
        <authorList>
            <person name="Huh W.-K."/>
            <person name="Falvo J.V."/>
            <person name="Gerke L.C."/>
            <person name="Carroll A.S."/>
            <person name="Howson R.W."/>
            <person name="Weissman J.S."/>
            <person name="O'Shea E.K."/>
        </authorList>
    </citation>
    <scope>SUBCELLULAR LOCATION [LARGE SCALE ANALYSIS]</scope>
</reference>
<reference key="6">
    <citation type="journal article" date="2003" name="Nature">
        <title>Global analysis of protein expression in yeast.</title>
        <authorList>
            <person name="Ghaemmaghami S."/>
            <person name="Huh W.-K."/>
            <person name="Bower K."/>
            <person name="Howson R.W."/>
            <person name="Belle A."/>
            <person name="Dephoure N."/>
            <person name="O'Shea E.K."/>
            <person name="Weissman J.S."/>
        </authorList>
    </citation>
    <scope>LEVEL OF PROTEIN EXPRESSION [LARGE SCALE ANALYSIS]</scope>
</reference>
<reference key="7">
    <citation type="journal article" date="2003" name="Science">
        <title>Control of nutrient-sensitive transcription programs by the unconventional prefoldin URI.</title>
        <authorList>
            <person name="Gstaiger M."/>
            <person name="Luke B."/>
            <person name="Hess D."/>
            <person name="Oakeley E.J."/>
            <person name="Wirbelauer C."/>
            <person name="Blondel M."/>
            <person name="Vigneron M."/>
            <person name="Peter M."/>
            <person name="Krek W."/>
        </authorList>
    </citation>
    <scope>FUNCTION</scope>
</reference>
<reference key="8">
    <citation type="journal article" date="2007" name="J. Proteome Res.">
        <title>Large-scale phosphorylation analysis of alpha-factor-arrested Saccharomyces cerevisiae.</title>
        <authorList>
            <person name="Li X."/>
            <person name="Gerber S.A."/>
            <person name="Rudner A.D."/>
            <person name="Beausoleil S.A."/>
            <person name="Haas W."/>
            <person name="Villen J."/>
            <person name="Elias J.E."/>
            <person name="Gygi S.P."/>
        </authorList>
    </citation>
    <scope>PHOSPHORYLATION [LARGE SCALE ANALYSIS] AT SER-580</scope>
    <scope>IDENTIFICATION BY MASS SPECTROMETRY [LARGE SCALE ANALYSIS]</scope>
    <source>
        <strain>ADR376</strain>
    </source>
</reference>
<reference key="9">
    <citation type="journal article" date="2008" name="Mol. Cell. Proteomics">
        <title>A multidimensional chromatography technology for in-depth phosphoproteome analysis.</title>
        <authorList>
            <person name="Albuquerque C.P."/>
            <person name="Smolka M.B."/>
            <person name="Payne S.H."/>
            <person name="Bafna V."/>
            <person name="Eng J."/>
            <person name="Zhou H."/>
        </authorList>
    </citation>
    <scope>PHOSPHORYLATION [LARGE SCALE ANALYSIS] AT SER-580</scope>
    <scope>IDENTIFICATION BY MASS SPECTROMETRY [LARGE SCALE ANALYSIS]</scope>
</reference>
<reference key="10">
    <citation type="journal article" date="2009" name="Science">
        <title>Global analysis of Cdk1 substrate phosphorylation sites provides insights into evolution.</title>
        <authorList>
            <person name="Holt L.J."/>
            <person name="Tuch B.B."/>
            <person name="Villen J."/>
            <person name="Johnson A.D."/>
            <person name="Gygi S.P."/>
            <person name="Morgan D.O."/>
        </authorList>
    </citation>
    <scope>PHOSPHORYLATION [LARGE SCALE ANALYSIS] AT SER-580</scope>
    <scope>IDENTIFICATION BY MASS SPECTROMETRY [LARGE SCALE ANALYSIS]</scope>
</reference>
<reference key="11">
    <citation type="journal article" date="2012" name="Proc. Natl. Acad. Sci. U.S.A.">
        <title>N-terminal acetylome analyses and functional insights of the N-terminal acetyltransferase NatB.</title>
        <authorList>
            <person name="Van Damme P."/>
            <person name="Lasa M."/>
            <person name="Polevoda B."/>
            <person name="Gazquez C."/>
            <person name="Elosegui-Artola A."/>
            <person name="Kim D.S."/>
            <person name="De Juan-Pardo E."/>
            <person name="Demeyer K."/>
            <person name="Hole K."/>
            <person name="Larrea E."/>
            <person name="Timmerman E."/>
            <person name="Prieto J."/>
            <person name="Arnesen T."/>
            <person name="Sherman F."/>
            <person name="Gevaert K."/>
            <person name="Aldabe R."/>
        </authorList>
    </citation>
    <scope>IDENTIFICATION BY MASS SPECTROMETRY [LARGE SCALE ANALYSIS]</scope>
</reference>
<gene>
    <name type="primary">BUD27</name>
    <name type="synonym">URI</name>
    <name type="ordered locus">YFL023W</name>
</gene>